<keyword id="KW-0067">ATP-binding</keyword>
<keyword id="KW-0143">Chaperone</keyword>
<keyword id="KW-0963">Cytoplasm</keyword>
<keyword id="KW-0413">Isomerase</keyword>
<keyword id="KW-0547">Nucleotide-binding</keyword>
<keyword id="KW-1185">Reference proteome</keyword>
<accession>Q1GJ36</accession>
<reference key="1">
    <citation type="submission" date="2006-05" db="EMBL/GenBank/DDBJ databases">
        <title>Complete sequence of chromosome of Silicibacter sp. TM1040.</title>
        <authorList>
            <consortium name="US DOE Joint Genome Institute"/>
            <person name="Copeland A."/>
            <person name="Lucas S."/>
            <person name="Lapidus A."/>
            <person name="Barry K."/>
            <person name="Detter J.C."/>
            <person name="Glavina del Rio T."/>
            <person name="Hammon N."/>
            <person name="Israni S."/>
            <person name="Dalin E."/>
            <person name="Tice H."/>
            <person name="Pitluck S."/>
            <person name="Brettin T."/>
            <person name="Bruce D."/>
            <person name="Han C."/>
            <person name="Tapia R."/>
            <person name="Goodwin L."/>
            <person name="Thompson L.S."/>
            <person name="Gilna P."/>
            <person name="Schmutz J."/>
            <person name="Larimer F."/>
            <person name="Land M."/>
            <person name="Hauser L."/>
            <person name="Kyrpides N."/>
            <person name="Kim E."/>
            <person name="Belas R."/>
            <person name="Moran M.A."/>
            <person name="Buchan A."/>
            <person name="Gonzalez J.M."/>
            <person name="Schell M.A."/>
            <person name="Sun F."/>
            <person name="Richardson P."/>
        </authorList>
    </citation>
    <scope>NUCLEOTIDE SEQUENCE [LARGE SCALE GENOMIC DNA]</scope>
    <source>
        <strain>TM1040</strain>
    </source>
</reference>
<proteinExistence type="inferred from homology"/>
<sequence length="547" mass="57936">MAAKDVKFDTDARNRMLKGVNTLADAVKVTLGPKGRNVVLEKSFGAPRITKDGVSVAKEIELEDKFENMGAQMVKEVASRTNDEAGDGTTTATVLAQSIVREGLKQVAAGLNPMDLKRGIDLATDKVVEAIKAMAREVKDSDEVAQVGTISANGEAEIGRQIADAMQKVGNDGVITVEENKGLETETDVVEGMQFDRGYLSPYFVTNADKMTAELEDCLILLHEKKLSSLQPMVPLLEQVIQSQKPLLIIAEDVEGEALATLVVNKLRGGLKIAAVKAPGFGDRRKAMLQDIAILTGGQVISEDLGMKLESVTMDMLGTAKKIQITKDETTIVDGAGEKAEIEARVAQIRAQIEETTSDYDREKLQERVAKLAGGVAVIRVGGMTEVEVKERKDRVDDALNATRAAVQEGVIVGGGVALVQAGKSLEGLTGVNADQNAGIAIVRRALEAPLRQIAENAGVDGAVVAGKIRESEDKNFGFNAQTEEYGDMFSFGVIDPAKVTRTALEDAASIAGLLITTEAMVADKPAKEGAAPAGGMPDMGGMGGMM</sequence>
<feature type="chain" id="PRO_0000256988" description="Chaperonin GroEL">
    <location>
        <begin position="1"/>
        <end position="547"/>
    </location>
</feature>
<feature type="region of interest" description="Disordered" evidence="2">
    <location>
        <begin position="528"/>
        <end position="547"/>
    </location>
</feature>
<feature type="compositionally biased region" description="Gly residues" evidence="2">
    <location>
        <begin position="538"/>
        <end position="547"/>
    </location>
</feature>
<feature type="binding site" evidence="1">
    <location>
        <begin position="30"/>
        <end position="33"/>
    </location>
    <ligand>
        <name>ATP</name>
        <dbReference type="ChEBI" id="CHEBI:30616"/>
    </ligand>
</feature>
<feature type="binding site" evidence="1">
    <location>
        <position position="51"/>
    </location>
    <ligand>
        <name>ATP</name>
        <dbReference type="ChEBI" id="CHEBI:30616"/>
    </ligand>
</feature>
<feature type="binding site" evidence="1">
    <location>
        <begin position="87"/>
        <end position="91"/>
    </location>
    <ligand>
        <name>ATP</name>
        <dbReference type="ChEBI" id="CHEBI:30616"/>
    </ligand>
</feature>
<feature type="binding site" evidence="1">
    <location>
        <position position="415"/>
    </location>
    <ligand>
        <name>ATP</name>
        <dbReference type="ChEBI" id="CHEBI:30616"/>
    </ligand>
</feature>
<feature type="binding site" evidence="1">
    <location>
        <position position="496"/>
    </location>
    <ligand>
        <name>ATP</name>
        <dbReference type="ChEBI" id="CHEBI:30616"/>
    </ligand>
</feature>
<organism>
    <name type="scientific">Ruegeria sp. (strain TM1040)</name>
    <name type="common">Silicibacter sp.</name>
    <dbReference type="NCBI Taxonomy" id="292414"/>
    <lineage>
        <taxon>Bacteria</taxon>
        <taxon>Pseudomonadati</taxon>
        <taxon>Pseudomonadota</taxon>
        <taxon>Alphaproteobacteria</taxon>
        <taxon>Rhodobacterales</taxon>
        <taxon>Roseobacteraceae</taxon>
        <taxon>Ruegeria</taxon>
    </lineage>
</organism>
<name>CH60_RUEST</name>
<gene>
    <name evidence="1" type="primary">groEL</name>
    <name evidence="1" type="synonym">groL</name>
    <name type="ordered locus">TM1040_0597</name>
</gene>
<dbReference type="EC" id="5.6.1.7" evidence="1"/>
<dbReference type="EMBL" id="CP000377">
    <property type="protein sequence ID" value="ABF63330.1"/>
    <property type="molecule type" value="Genomic_DNA"/>
</dbReference>
<dbReference type="RefSeq" id="WP_005616555.1">
    <property type="nucleotide sequence ID" value="NC_008044.1"/>
</dbReference>
<dbReference type="SMR" id="Q1GJ36"/>
<dbReference type="STRING" id="292414.TM1040_0597"/>
<dbReference type="GeneID" id="28250243"/>
<dbReference type="KEGG" id="sit:TM1040_0597"/>
<dbReference type="eggNOG" id="COG0459">
    <property type="taxonomic scope" value="Bacteria"/>
</dbReference>
<dbReference type="HOGENOM" id="CLU_016503_3_0_5"/>
<dbReference type="OrthoDB" id="9766614at2"/>
<dbReference type="Proteomes" id="UP000000636">
    <property type="component" value="Chromosome"/>
</dbReference>
<dbReference type="GO" id="GO:0005737">
    <property type="term" value="C:cytoplasm"/>
    <property type="evidence" value="ECO:0007669"/>
    <property type="project" value="UniProtKB-SubCell"/>
</dbReference>
<dbReference type="GO" id="GO:0005524">
    <property type="term" value="F:ATP binding"/>
    <property type="evidence" value="ECO:0007669"/>
    <property type="project" value="UniProtKB-UniRule"/>
</dbReference>
<dbReference type="GO" id="GO:0140662">
    <property type="term" value="F:ATP-dependent protein folding chaperone"/>
    <property type="evidence" value="ECO:0007669"/>
    <property type="project" value="InterPro"/>
</dbReference>
<dbReference type="GO" id="GO:0016853">
    <property type="term" value="F:isomerase activity"/>
    <property type="evidence" value="ECO:0007669"/>
    <property type="project" value="UniProtKB-KW"/>
</dbReference>
<dbReference type="GO" id="GO:0051082">
    <property type="term" value="F:unfolded protein binding"/>
    <property type="evidence" value="ECO:0007669"/>
    <property type="project" value="UniProtKB-UniRule"/>
</dbReference>
<dbReference type="GO" id="GO:0042026">
    <property type="term" value="P:protein refolding"/>
    <property type="evidence" value="ECO:0007669"/>
    <property type="project" value="UniProtKB-UniRule"/>
</dbReference>
<dbReference type="CDD" id="cd03344">
    <property type="entry name" value="GroEL"/>
    <property type="match status" value="1"/>
</dbReference>
<dbReference type="FunFam" id="1.10.560.10:FF:000001">
    <property type="entry name" value="60 kDa chaperonin"/>
    <property type="match status" value="1"/>
</dbReference>
<dbReference type="FunFam" id="3.50.7.10:FF:000001">
    <property type="entry name" value="60 kDa chaperonin"/>
    <property type="match status" value="1"/>
</dbReference>
<dbReference type="Gene3D" id="3.50.7.10">
    <property type="entry name" value="GroEL"/>
    <property type="match status" value="1"/>
</dbReference>
<dbReference type="Gene3D" id="1.10.560.10">
    <property type="entry name" value="GroEL-like equatorial domain"/>
    <property type="match status" value="1"/>
</dbReference>
<dbReference type="Gene3D" id="3.30.260.10">
    <property type="entry name" value="TCP-1-like chaperonin intermediate domain"/>
    <property type="match status" value="1"/>
</dbReference>
<dbReference type="HAMAP" id="MF_00600">
    <property type="entry name" value="CH60"/>
    <property type="match status" value="1"/>
</dbReference>
<dbReference type="InterPro" id="IPR018370">
    <property type="entry name" value="Chaperonin_Cpn60_CS"/>
</dbReference>
<dbReference type="InterPro" id="IPR001844">
    <property type="entry name" value="Cpn60/GroEL"/>
</dbReference>
<dbReference type="InterPro" id="IPR002423">
    <property type="entry name" value="Cpn60/GroEL/TCP-1"/>
</dbReference>
<dbReference type="InterPro" id="IPR027409">
    <property type="entry name" value="GroEL-like_apical_dom_sf"/>
</dbReference>
<dbReference type="InterPro" id="IPR027413">
    <property type="entry name" value="GROEL-like_equatorial_sf"/>
</dbReference>
<dbReference type="InterPro" id="IPR027410">
    <property type="entry name" value="TCP-1-like_intermed_sf"/>
</dbReference>
<dbReference type="NCBIfam" id="TIGR02348">
    <property type="entry name" value="GroEL"/>
    <property type="match status" value="1"/>
</dbReference>
<dbReference type="NCBIfam" id="NF000592">
    <property type="entry name" value="PRK00013.1"/>
    <property type="match status" value="1"/>
</dbReference>
<dbReference type="NCBIfam" id="NF009487">
    <property type="entry name" value="PRK12849.1"/>
    <property type="match status" value="1"/>
</dbReference>
<dbReference type="NCBIfam" id="NF009488">
    <property type="entry name" value="PRK12850.1"/>
    <property type="match status" value="1"/>
</dbReference>
<dbReference type="NCBIfam" id="NF009489">
    <property type="entry name" value="PRK12851.1"/>
    <property type="match status" value="1"/>
</dbReference>
<dbReference type="PANTHER" id="PTHR45633">
    <property type="entry name" value="60 KDA HEAT SHOCK PROTEIN, MITOCHONDRIAL"/>
    <property type="match status" value="1"/>
</dbReference>
<dbReference type="Pfam" id="PF00118">
    <property type="entry name" value="Cpn60_TCP1"/>
    <property type="match status" value="1"/>
</dbReference>
<dbReference type="PRINTS" id="PR00298">
    <property type="entry name" value="CHAPERONIN60"/>
</dbReference>
<dbReference type="SUPFAM" id="SSF52029">
    <property type="entry name" value="GroEL apical domain-like"/>
    <property type="match status" value="1"/>
</dbReference>
<dbReference type="SUPFAM" id="SSF48592">
    <property type="entry name" value="GroEL equatorial domain-like"/>
    <property type="match status" value="1"/>
</dbReference>
<dbReference type="SUPFAM" id="SSF54849">
    <property type="entry name" value="GroEL-intermediate domain like"/>
    <property type="match status" value="1"/>
</dbReference>
<dbReference type="PROSITE" id="PS00296">
    <property type="entry name" value="CHAPERONINS_CPN60"/>
    <property type="match status" value="1"/>
</dbReference>
<protein>
    <recommendedName>
        <fullName evidence="1">Chaperonin GroEL</fullName>
        <ecNumber evidence="1">5.6.1.7</ecNumber>
    </recommendedName>
    <alternativeName>
        <fullName evidence="1">60 kDa chaperonin</fullName>
    </alternativeName>
    <alternativeName>
        <fullName evidence="1">Chaperonin-60</fullName>
        <shortName evidence="1">Cpn60</shortName>
    </alternativeName>
</protein>
<comment type="function">
    <text evidence="1">Together with its co-chaperonin GroES, plays an essential role in assisting protein folding. The GroEL-GroES system forms a nano-cage that allows encapsulation of the non-native substrate proteins and provides a physical environment optimized to promote and accelerate protein folding.</text>
</comment>
<comment type="catalytic activity">
    <reaction evidence="1">
        <text>ATP + H2O + a folded polypeptide = ADP + phosphate + an unfolded polypeptide.</text>
        <dbReference type="EC" id="5.6.1.7"/>
    </reaction>
</comment>
<comment type="subunit">
    <text evidence="1">Forms a cylinder of 14 subunits composed of two heptameric rings stacked back-to-back. Interacts with the co-chaperonin GroES.</text>
</comment>
<comment type="subcellular location">
    <subcellularLocation>
        <location evidence="1">Cytoplasm</location>
    </subcellularLocation>
</comment>
<comment type="similarity">
    <text evidence="1">Belongs to the chaperonin (HSP60) family.</text>
</comment>
<evidence type="ECO:0000255" key="1">
    <source>
        <dbReference type="HAMAP-Rule" id="MF_00600"/>
    </source>
</evidence>
<evidence type="ECO:0000256" key="2">
    <source>
        <dbReference type="SAM" id="MobiDB-lite"/>
    </source>
</evidence>